<sequence>MSTSFENKATNRGVITFTISQDKIKPALDKAFNKIKKDLNAPGFRKGHMPRPVFNQKFGEEVLYEDALNIVLPEAYEAAVTELGLDVVAQPKIDVVSMEKGKEWTLSAEVVTKPEVKLGDYKNLVVEVDASKEVSDEDVDAKIERERQNLAELIIKDGEAAQGDTVVIDFVGSVDGVEFDGGKGDNFSLELGSGQFIPGFEDQLVGAKAGDEVEVNVTFPESYQAEDLAGKAAKFMTTIHEVKTKEVPELDDELAKDIDEDVDTLEDLKVKYRKELEAAQETAYDDAVEGAAIELAVANAEIVDLPEEMIHEEVNRSVNEFMGNMQRQGISPEMYFQLTGTTQEDLHNQYSAEADKRVKTNLVIEAIAKAEGFEATDSEIEQEINDLATEYNMPADQVRSLLSADMLKHDIAMKKAVEVITSTASVK</sequence>
<organism>
    <name type="scientific">Streptococcus pyogenes serotype M3 (strain ATCC BAA-595 / MGAS315)</name>
    <dbReference type="NCBI Taxonomy" id="198466"/>
    <lineage>
        <taxon>Bacteria</taxon>
        <taxon>Bacillati</taxon>
        <taxon>Bacillota</taxon>
        <taxon>Bacilli</taxon>
        <taxon>Lactobacillales</taxon>
        <taxon>Streptococcaceae</taxon>
        <taxon>Streptococcus</taxon>
    </lineage>
</organism>
<comment type="function">
    <text evidence="1">Involved in protein export. Acts as a chaperone by maintaining the newly synthesized protein in an open conformation. Functions as a peptidyl-prolyl cis-trans isomerase.</text>
</comment>
<comment type="catalytic activity">
    <reaction evidence="1">
        <text>[protein]-peptidylproline (omega=180) = [protein]-peptidylproline (omega=0)</text>
        <dbReference type="Rhea" id="RHEA:16237"/>
        <dbReference type="Rhea" id="RHEA-COMP:10747"/>
        <dbReference type="Rhea" id="RHEA-COMP:10748"/>
        <dbReference type="ChEBI" id="CHEBI:83833"/>
        <dbReference type="ChEBI" id="CHEBI:83834"/>
        <dbReference type="EC" id="5.2.1.8"/>
    </reaction>
</comment>
<comment type="subcellular location">
    <subcellularLocation>
        <location>Cytoplasm</location>
    </subcellularLocation>
    <text evidence="1">About half TF is bound to the ribosome near the polypeptide exit tunnel while the other half is free in the cytoplasm.</text>
</comment>
<comment type="domain">
    <text evidence="1">Consists of 3 domains; the N-terminus binds the ribosome, the middle domain has PPIase activity, while the C-terminus has intrinsic chaperone activity on its own.</text>
</comment>
<comment type="similarity">
    <text evidence="1">Belongs to the FKBP-type PPIase family. Tig subfamily.</text>
</comment>
<protein>
    <recommendedName>
        <fullName evidence="1">Trigger factor</fullName>
        <shortName evidence="1">TF</shortName>
        <ecNumber evidence="1">5.2.1.8</ecNumber>
    </recommendedName>
    <alternativeName>
        <fullName evidence="1">PPIase</fullName>
    </alternativeName>
</protein>
<name>TIG_STRP3</name>
<gene>
    <name evidence="1" type="primary">tig</name>
    <name type="ordered locus">SpyM3_1634</name>
</gene>
<proteinExistence type="inferred from homology"/>
<accession>P0DF98</accession>
<accession>Q879L7</accession>
<dbReference type="EC" id="5.2.1.8" evidence="1"/>
<dbReference type="EMBL" id="AE014074">
    <property type="protein sequence ID" value="AAM80241.1"/>
    <property type="molecule type" value="Genomic_DNA"/>
</dbReference>
<dbReference type="RefSeq" id="WP_011054989.1">
    <property type="nucleotide sequence ID" value="NC_004070.1"/>
</dbReference>
<dbReference type="SMR" id="P0DF98"/>
<dbReference type="KEGG" id="spg:SpyM3_1634"/>
<dbReference type="HOGENOM" id="CLU_033058_3_2_9"/>
<dbReference type="Proteomes" id="UP000000564">
    <property type="component" value="Chromosome"/>
</dbReference>
<dbReference type="GO" id="GO:0005737">
    <property type="term" value="C:cytoplasm"/>
    <property type="evidence" value="ECO:0007669"/>
    <property type="project" value="UniProtKB-SubCell"/>
</dbReference>
<dbReference type="GO" id="GO:0003755">
    <property type="term" value="F:peptidyl-prolyl cis-trans isomerase activity"/>
    <property type="evidence" value="ECO:0007669"/>
    <property type="project" value="UniProtKB-UniRule"/>
</dbReference>
<dbReference type="GO" id="GO:0044183">
    <property type="term" value="F:protein folding chaperone"/>
    <property type="evidence" value="ECO:0007669"/>
    <property type="project" value="TreeGrafter"/>
</dbReference>
<dbReference type="GO" id="GO:0043022">
    <property type="term" value="F:ribosome binding"/>
    <property type="evidence" value="ECO:0007669"/>
    <property type="project" value="TreeGrafter"/>
</dbReference>
<dbReference type="GO" id="GO:0051083">
    <property type="term" value="P:'de novo' cotranslational protein folding"/>
    <property type="evidence" value="ECO:0007669"/>
    <property type="project" value="TreeGrafter"/>
</dbReference>
<dbReference type="GO" id="GO:0051301">
    <property type="term" value="P:cell division"/>
    <property type="evidence" value="ECO:0007669"/>
    <property type="project" value="UniProtKB-KW"/>
</dbReference>
<dbReference type="GO" id="GO:0061077">
    <property type="term" value="P:chaperone-mediated protein folding"/>
    <property type="evidence" value="ECO:0007669"/>
    <property type="project" value="TreeGrafter"/>
</dbReference>
<dbReference type="GO" id="GO:0015031">
    <property type="term" value="P:protein transport"/>
    <property type="evidence" value="ECO:0007669"/>
    <property type="project" value="UniProtKB-UniRule"/>
</dbReference>
<dbReference type="GO" id="GO:0043335">
    <property type="term" value="P:protein unfolding"/>
    <property type="evidence" value="ECO:0007669"/>
    <property type="project" value="TreeGrafter"/>
</dbReference>
<dbReference type="FunFam" id="3.10.50.40:FF:000001">
    <property type="entry name" value="Trigger factor"/>
    <property type="match status" value="1"/>
</dbReference>
<dbReference type="Gene3D" id="3.10.50.40">
    <property type="match status" value="1"/>
</dbReference>
<dbReference type="Gene3D" id="3.30.70.1050">
    <property type="entry name" value="Trigger factor ribosome-binding domain"/>
    <property type="match status" value="1"/>
</dbReference>
<dbReference type="Gene3D" id="1.10.3120.10">
    <property type="entry name" value="Trigger factor, C-terminal domain"/>
    <property type="match status" value="1"/>
</dbReference>
<dbReference type="HAMAP" id="MF_00303">
    <property type="entry name" value="Trigger_factor_Tig"/>
    <property type="match status" value="1"/>
</dbReference>
<dbReference type="InterPro" id="IPR046357">
    <property type="entry name" value="PPIase_dom_sf"/>
</dbReference>
<dbReference type="InterPro" id="IPR001179">
    <property type="entry name" value="PPIase_FKBP_dom"/>
</dbReference>
<dbReference type="InterPro" id="IPR005215">
    <property type="entry name" value="Trig_fac"/>
</dbReference>
<dbReference type="InterPro" id="IPR008880">
    <property type="entry name" value="Trigger_fac_C"/>
</dbReference>
<dbReference type="InterPro" id="IPR037041">
    <property type="entry name" value="Trigger_fac_C_sf"/>
</dbReference>
<dbReference type="InterPro" id="IPR008881">
    <property type="entry name" value="Trigger_fac_ribosome-bd_bac"/>
</dbReference>
<dbReference type="InterPro" id="IPR036611">
    <property type="entry name" value="Trigger_fac_ribosome-bd_sf"/>
</dbReference>
<dbReference type="InterPro" id="IPR027304">
    <property type="entry name" value="Trigger_fact/SurA_dom_sf"/>
</dbReference>
<dbReference type="NCBIfam" id="TIGR00115">
    <property type="entry name" value="tig"/>
    <property type="match status" value="1"/>
</dbReference>
<dbReference type="PANTHER" id="PTHR30560">
    <property type="entry name" value="TRIGGER FACTOR CHAPERONE AND PEPTIDYL-PROLYL CIS/TRANS ISOMERASE"/>
    <property type="match status" value="1"/>
</dbReference>
<dbReference type="PANTHER" id="PTHR30560:SF3">
    <property type="entry name" value="TRIGGER FACTOR-LIKE PROTEIN TIG, CHLOROPLASTIC"/>
    <property type="match status" value="1"/>
</dbReference>
<dbReference type="Pfam" id="PF00254">
    <property type="entry name" value="FKBP_C"/>
    <property type="match status" value="1"/>
</dbReference>
<dbReference type="Pfam" id="PF05698">
    <property type="entry name" value="Trigger_C"/>
    <property type="match status" value="1"/>
</dbReference>
<dbReference type="Pfam" id="PF05697">
    <property type="entry name" value="Trigger_N"/>
    <property type="match status" value="1"/>
</dbReference>
<dbReference type="PIRSF" id="PIRSF003095">
    <property type="entry name" value="Trigger_factor"/>
    <property type="match status" value="1"/>
</dbReference>
<dbReference type="SUPFAM" id="SSF54534">
    <property type="entry name" value="FKBP-like"/>
    <property type="match status" value="1"/>
</dbReference>
<dbReference type="SUPFAM" id="SSF109998">
    <property type="entry name" value="Triger factor/SurA peptide-binding domain-like"/>
    <property type="match status" value="1"/>
</dbReference>
<dbReference type="SUPFAM" id="SSF102735">
    <property type="entry name" value="Trigger factor ribosome-binding domain"/>
    <property type="match status" value="1"/>
</dbReference>
<dbReference type="PROSITE" id="PS50059">
    <property type="entry name" value="FKBP_PPIASE"/>
    <property type="match status" value="1"/>
</dbReference>
<keyword id="KW-0131">Cell cycle</keyword>
<keyword id="KW-0132">Cell division</keyword>
<keyword id="KW-0143">Chaperone</keyword>
<keyword id="KW-0963">Cytoplasm</keyword>
<keyword id="KW-0413">Isomerase</keyword>
<keyword id="KW-0697">Rotamase</keyword>
<evidence type="ECO:0000255" key="1">
    <source>
        <dbReference type="HAMAP-Rule" id="MF_00303"/>
    </source>
</evidence>
<feature type="chain" id="PRO_0000179441" description="Trigger factor">
    <location>
        <begin position="1"/>
        <end position="427"/>
    </location>
</feature>
<feature type="domain" description="PPIase FKBP-type" evidence="1">
    <location>
        <begin position="163"/>
        <end position="248"/>
    </location>
</feature>
<reference key="1">
    <citation type="journal article" date="2002" name="Proc. Natl. Acad. Sci. U.S.A.">
        <title>Genome sequence of a serotype M3 strain of group A Streptococcus: phage-encoded toxins, the high-virulence phenotype, and clone emergence.</title>
        <authorList>
            <person name="Beres S.B."/>
            <person name="Sylva G.L."/>
            <person name="Barbian K.D."/>
            <person name="Lei B."/>
            <person name="Hoff J.S."/>
            <person name="Mammarella N.D."/>
            <person name="Liu M.-Y."/>
            <person name="Smoot J.C."/>
            <person name="Porcella S.F."/>
            <person name="Parkins L.D."/>
            <person name="Campbell D.S."/>
            <person name="Smith T.M."/>
            <person name="McCormick J.K."/>
            <person name="Leung D.Y.M."/>
            <person name="Schlievert P.M."/>
            <person name="Musser J.M."/>
        </authorList>
    </citation>
    <scope>NUCLEOTIDE SEQUENCE [LARGE SCALE GENOMIC DNA]</scope>
    <source>
        <strain>ATCC BAA-595 / MGAS315</strain>
    </source>
</reference>